<accession>Q9KUE1</accession>
<feature type="chain" id="PRO_0000167388" description="UPF0102 protein VC_0580">
    <location>
        <begin position="1"/>
        <end position="122"/>
    </location>
</feature>
<dbReference type="EMBL" id="AE003852">
    <property type="protein sequence ID" value="AAF93748.1"/>
    <property type="molecule type" value="Genomic_DNA"/>
</dbReference>
<dbReference type="PIR" id="A82306">
    <property type="entry name" value="A82306"/>
</dbReference>
<dbReference type="RefSeq" id="NP_230231.1">
    <property type="nucleotide sequence ID" value="NC_002505.1"/>
</dbReference>
<dbReference type="RefSeq" id="WP_001893625.1">
    <property type="nucleotide sequence ID" value="NZ_LT906614.1"/>
</dbReference>
<dbReference type="SMR" id="Q9KUE1"/>
<dbReference type="STRING" id="243277.VC_0580"/>
<dbReference type="DNASU" id="2615368"/>
<dbReference type="EnsemblBacteria" id="AAF93748">
    <property type="protein sequence ID" value="AAF93748"/>
    <property type="gene ID" value="VC_0580"/>
</dbReference>
<dbReference type="KEGG" id="vch:VC_0580"/>
<dbReference type="PATRIC" id="fig|243277.26.peg.553"/>
<dbReference type="eggNOG" id="COG0792">
    <property type="taxonomic scope" value="Bacteria"/>
</dbReference>
<dbReference type="HOGENOM" id="CLU_115353_1_1_6"/>
<dbReference type="Proteomes" id="UP000000584">
    <property type="component" value="Chromosome 1"/>
</dbReference>
<dbReference type="GO" id="GO:0003676">
    <property type="term" value="F:nucleic acid binding"/>
    <property type="evidence" value="ECO:0007669"/>
    <property type="project" value="InterPro"/>
</dbReference>
<dbReference type="CDD" id="cd20736">
    <property type="entry name" value="PoNe_Nuclease"/>
    <property type="match status" value="1"/>
</dbReference>
<dbReference type="Gene3D" id="3.40.1350.10">
    <property type="match status" value="1"/>
</dbReference>
<dbReference type="HAMAP" id="MF_00048">
    <property type="entry name" value="UPF0102"/>
    <property type="match status" value="1"/>
</dbReference>
<dbReference type="InterPro" id="IPR011335">
    <property type="entry name" value="Restrct_endonuc-II-like"/>
</dbReference>
<dbReference type="InterPro" id="IPR011856">
    <property type="entry name" value="tRNA_endonuc-like_dom_sf"/>
</dbReference>
<dbReference type="InterPro" id="IPR003509">
    <property type="entry name" value="UPF0102_YraN-like"/>
</dbReference>
<dbReference type="NCBIfam" id="NF009150">
    <property type="entry name" value="PRK12497.1-3"/>
    <property type="match status" value="1"/>
</dbReference>
<dbReference type="NCBIfam" id="TIGR00252">
    <property type="entry name" value="YraN family protein"/>
    <property type="match status" value="1"/>
</dbReference>
<dbReference type="PANTHER" id="PTHR34039">
    <property type="entry name" value="UPF0102 PROTEIN YRAN"/>
    <property type="match status" value="1"/>
</dbReference>
<dbReference type="PANTHER" id="PTHR34039:SF1">
    <property type="entry name" value="UPF0102 PROTEIN YRAN"/>
    <property type="match status" value="1"/>
</dbReference>
<dbReference type="Pfam" id="PF02021">
    <property type="entry name" value="UPF0102"/>
    <property type="match status" value="1"/>
</dbReference>
<dbReference type="SUPFAM" id="SSF52980">
    <property type="entry name" value="Restriction endonuclease-like"/>
    <property type="match status" value="1"/>
</dbReference>
<protein>
    <recommendedName>
        <fullName evidence="1">UPF0102 protein VC_0580</fullName>
    </recommendedName>
</protein>
<name>Y580_VIBCH</name>
<reference key="1">
    <citation type="journal article" date="2000" name="Nature">
        <title>DNA sequence of both chromosomes of the cholera pathogen Vibrio cholerae.</title>
        <authorList>
            <person name="Heidelberg J.F."/>
            <person name="Eisen J.A."/>
            <person name="Nelson W.C."/>
            <person name="Clayton R.A."/>
            <person name="Gwinn M.L."/>
            <person name="Dodson R.J."/>
            <person name="Haft D.H."/>
            <person name="Hickey E.K."/>
            <person name="Peterson J.D."/>
            <person name="Umayam L.A."/>
            <person name="Gill S.R."/>
            <person name="Nelson K.E."/>
            <person name="Read T.D."/>
            <person name="Tettelin H."/>
            <person name="Richardson D.L."/>
            <person name="Ermolaeva M.D."/>
            <person name="Vamathevan J.J."/>
            <person name="Bass S."/>
            <person name="Qin H."/>
            <person name="Dragoi I."/>
            <person name="Sellers P."/>
            <person name="McDonald L.A."/>
            <person name="Utterback T.R."/>
            <person name="Fleischmann R.D."/>
            <person name="Nierman W.C."/>
            <person name="White O."/>
            <person name="Salzberg S.L."/>
            <person name="Smith H.O."/>
            <person name="Colwell R.R."/>
            <person name="Mekalanos J.J."/>
            <person name="Venter J.C."/>
            <person name="Fraser C.M."/>
        </authorList>
    </citation>
    <scope>NUCLEOTIDE SEQUENCE [LARGE SCALE GENOMIC DNA]</scope>
    <source>
        <strain>ATCC 39315 / El Tor Inaba N16961</strain>
    </source>
</reference>
<keyword id="KW-1185">Reference proteome</keyword>
<gene>
    <name type="ordered locus">VC_0580</name>
</gene>
<comment type="similarity">
    <text evidence="1">Belongs to the UPF0102 family.</text>
</comment>
<organism>
    <name type="scientific">Vibrio cholerae serotype O1 (strain ATCC 39315 / El Tor Inaba N16961)</name>
    <dbReference type="NCBI Taxonomy" id="243277"/>
    <lineage>
        <taxon>Bacteria</taxon>
        <taxon>Pseudomonadati</taxon>
        <taxon>Pseudomonadota</taxon>
        <taxon>Gammaproteobacteria</taxon>
        <taxon>Vibrionales</taxon>
        <taxon>Vibrionaceae</taxon>
        <taxon>Vibrio</taxon>
    </lineage>
</organism>
<proteinExistence type="inferred from homology"/>
<sequence length="122" mass="14186">MVFVNSRHQGNHYEQMAADYLRRQGLTLVTQNVNYRFGELDLIMRDGNTLVFVEVRYRNNTQHGHAAETVTRTKRARLIKAANCWMLANKMNSHSADFRFDVIAIHQQGQHIDWLKNAITEG</sequence>
<evidence type="ECO:0000255" key="1">
    <source>
        <dbReference type="HAMAP-Rule" id="MF_00048"/>
    </source>
</evidence>